<name>KAD_STRT2</name>
<keyword id="KW-0067">ATP-binding</keyword>
<keyword id="KW-0963">Cytoplasm</keyword>
<keyword id="KW-0418">Kinase</keyword>
<keyword id="KW-0479">Metal-binding</keyword>
<keyword id="KW-0545">Nucleotide biosynthesis</keyword>
<keyword id="KW-0547">Nucleotide-binding</keyword>
<keyword id="KW-1185">Reference proteome</keyword>
<keyword id="KW-0808">Transferase</keyword>
<keyword id="KW-0862">Zinc</keyword>
<gene>
    <name evidence="1" type="primary">adk</name>
    <name type="ordered locus">stu1913</name>
</gene>
<reference key="1">
    <citation type="journal article" date="2004" name="Nat. Biotechnol.">
        <title>Complete sequence and comparative genome analysis of the dairy bacterium Streptococcus thermophilus.</title>
        <authorList>
            <person name="Bolotin A."/>
            <person name="Quinquis B."/>
            <person name="Renault P."/>
            <person name="Sorokin A."/>
            <person name="Ehrlich S.D."/>
            <person name="Kulakauskas S."/>
            <person name="Lapidus A."/>
            <person name="Goltsman E."/>
            <person name="Mazur M."/>
            <person name="Pusch G.D."/>
            <person name="Fonstein M."/>
            <person name="Overbeek R."/>
            <person name="Kyprides N."/>
            <person name="Purnelle B."/>
            <person name="Prozzi D."/>
            <person name="Ngui K."/>
            <person name="Masuy D."/>
            <person name="Hancy F."/>
            <person name="Burteau S."/>
            <person name="Boutry M."/>
            <person name="Delcour J."/>
            <person name="Goffeau A."/>
            <person name="Hols P."/>
        </authorList>
    </citation>
    <scope>NUCLEOTIDE SEQUENCE [LARGE SCALE GENOMIC DNA]</scope>
    <source>
        <strain>ATCC BAA-250 / LMG 18311</strain>
    </source>
</reference>
<evidence type="ECO:0000255" key="1">
    <source>
        <dbReference type="HAMAP-Rule" id="MF_00235"/>
    </source>
</evidence>
<organism>
    <name type="scientific">Streptococcus thermophilus (strain ATCC BAA-250 / LMG 18311)</name>
    <dbReference type="NCBI Taxonomy" id="264199"/>
    <lineage>
        <taxon>Bacteria</taxon>
        <taxon>Bacillati</taxon>
        <taxon>Bacillota</taxon>
        <taxon>Bacilli</taxon>
        <taxon>Lactobacillales</taxon>
        <taxon>Streptococcaceae</taxon>
        <taxon>Streptococcus</taxon>
    </lineage>
</organism>
<protein>
    <recommendedName>
        <fullName evidence="1">Adenylate kinase</fullName>
        <shortName evidence="1">AK</shortName>
        <ecNumber evidence="1">2.7.4.3</ecNumber>
    </recommendedName>
    <alternativeName>
        <fullName evidence="1">ATP-AMP transphosphorylase</fullName>
    </alternativeName>
    <alternativeName>
        <fullName evidence="1">ATP:AMP phosphotransferase</fullName>
    </alternativeName>
    <alternativeName>
        <fullName evidence="1">Adenylate monophosphate kinase</fullName>
    </alternativeName>
</protein>
<feature type="chain" id="PRO_1000021774" description="Adenylate kinase">
    <location>
        <begin position="1"/>
        <end position="218"/>
    </location>
</feature>
<feature type="region of interest" description="NMP" evidence="1">
    <location>
        <begin position="30"/>
        <end position="59"/>
    </location>
</feature>
<feature type="region of interest" description="LID" evidence="1">
    <location>
        <begin position="127"/>
        <end position="165"/>
    </location>
</feature>
<feature type="binding site" evidence="1">
    <location>
        <begin position="10"/>
        <end position="15"/>
    </location>
    <ligand>
        <name>ATP</name>
        <dbReference type="ChEBI" id="CHEBI:30616"/>
    </ligand>
</feature>
<feature type="binding site" evidence="1">
    <location>
        <position position="31"/>
    </location>
    <ligand>
        <name>AMP</name>
        <dbReference type="ChEBI" id="CHEBI:456215"/>
    </ligand>
</feature>
<feature type="binding site" evidence="1">
    <location>
        <position position="36"/>
    </location>
    <ligand>
        <name>AMP</name>
        <dbReference type="ChEBI" id="CHEBI:456215"/>
    </ligand>
</feature>
<feature type="binding site" evidence="1">
    <location>
        <begin position="57"/>
        <end position="59"/>
    </location>
    <ligand>
        <name>AMP</name>
        <dbReference type="ChEBI" id="CHEBI:456215"/>
    </ligand>
</feature>
<feature type="binding site" evidence="1">
    <location>
        <begin position="86"/>
        <end position="89"/>
    </location>
    <ligand>
        <name>AMP</name>
        <dbReference type="ChEBI" id="CHEBI:456215"/>
    </ligand>
</feature>
<feature type="binding site" evidence="1">
    <location>
        <position position="93"/>
    </location>
    <ligand>
        <name>AMP</name>
        <dbReference type="ChEBI" id="CHEBI:456215"/>
    </ligand>
</feature>
<feature type="binding site" evidence="1">
    <location>
        <position position="128"/>
    </location>
    <ligand>
        <name>ATP</name>
        <dbReference type="ChEBI" id="CHEBI:30616"/>
    </ligand>
</feature>
<feature type="binding site" evidence="1">
    <location>
        <position position="131"/>
    </location>
    <ligand>
        <name>Zn(2+)</name>
        <dbReference type="ChEBI" id="CHEBI:29105"/>
        <note>structural</note>
    </ligand>
</feature>
<feature type="binding site" evidence="1">
    <location>
        <position position="134"/>
    </location>
    <ligand>
        <name>Zn(2+)</name>
        <dbReference type="ChEBI" id="CHEBI:29105"/>
        <note>structural</note>
    </ligand>
</feature>
<feature type="binding site" evidence="1">
    <location>
        <begin position="137"/>
        <end position="138"/>
    </location>
    <ligand>
        <name>ATP</name>
        <dbReference type="ChEBI" id="CHEBI:30616"/>
    </ligand>
</feature>
<feature type="binding site" evidence="1">
    <location>
        <position position="151"/>
    </location>
    <ligand>
        <name>Zn(2+)</name>
        <dbReference type="ChEBI" id="CHEBI:29105"/>
        <note>structural</note>
    </ligand>
</feature>
<feature type="binding site" evidence="1">
    <location>
        <position position="154"/>
    </location>
    <ligand>
        <name>Zn(2+)</name>
        <dbReference type="ChEBI" id="CHEBI:29105"/>
        <note>structural</note>
    </ligand>
</feature>
<feature type="binding site" evidence="1">
    <location>
        <position position="162"/>
    </location>
    <ligand>
        <name>AMP</name>
        <dbReference type="ChEBI" id="CHEBI:456215"/>
    </ligand>
</feature>
<feature type="binding site" evidence="1">
    <location>
        <position position="173"/>
    </location>
    <ligand>
        <name>AMP</name>
        <dbReference type="ChEBI" id="CHEBI:456215"/>
    </ligand>
</feature>
<feature type="binding site" evidence="1">
    <location>
        <position position="201"/>
    </location>
    <ligand>
        <name>ATP</name>
        <dbReference type="ChEBI" id="CHEBI:30616"/>
    </ligand>
</feature>
<comment type="function">
    <text evidence="1">Catalyzes the reversible transfer of the terminal phosphate group between ATP and AMP. Plays an important role in cellular energy homeostasis and in adenine nucleotide metabolism.</text>
</comment>
<comment type="catalytic activity">
    <reaction evidence="1">
        <text>AMP + ATP = 2 ADP</text>
        <dbReference type="Rhea" id="RHEA:12973"/>
        <dbReference type="ChEBI" id="CHEBI:30616"/>
        <dbReference type="ChEBI" id="CHEBI:456215"/>
        <dbReference type="ChEBI" id="CHEBI:456216"/>
        <dbReference type="EC" id="2.7.4.3"/>
    </reaction>
</comment>
<comment type="pathway">
    <text evidence="1">Purine metabolism; AMP biosynthesis via salvage pathway; AMP from ADP: step 1/1.</text>
</comment>
<comment type="subunit">
    <text evidence="1">Monomer.</text>
</comment>
<comment type="subcellular location">
    <subcellularLocation>
        <location evidence="1">Cytoplasm</location>
    </subcellularLocation>
</comment>
<comment type="domain">
    <text evidence="1">Consists of three domains, a large central CORE domain and two small peripheral domains, NMPbind and LID, which undergo movements during catalysis. The LID domain closes over the site of phosphoryl transfer upon ATP binding. Assembling and dissambling the active center during each catalytic cycle provides an effective means to prevent ATP hydrolysis. Some bacteria have evolved a zinc-coordinating structure that stabilizes the LID domain.</text>
</comment>
<comment type="similarity">
    <text evidence="1">Belongs to the adenylate kinase family.</text>
</comment>
<proteinExistence type="inferred from homology"/>
<sequence length="218" mass="23872">MNLLIMGLPGAGKGTQAAKIVEEFGVAHISTGDMFRAAMANQTEMGRLAKSFIDKGELVPDEVTNGIVKERLAESDIAEKGFLLDGYPRTIEQAHALDETLKALDIKLDGVINIEVNPESLVERLSGRFICRSCGSTYHKVFNPTKVEGTCDVCGGHEFFQREDDKPETVKRRLDVNIAQGEPIIAHYRELGLVSDIQGNQDIDDVFADVKKAIAAIK</sequence>
<dbReference type="EC" id="2.7.4.3" evidence="1"/>
<dbReference type="EMBL" id="CP000023">
    <property type="protein sequence ID" value="AAV61511.1"/>
    <property type="molecule type" value="Genomic_DNA"/>
</dbReference>
<dbReference type="RefSeq" id="WP_002952136.1">
    <property type="nucleotide sequence ID" value="NC_006448.1"/>
</dbReference>
<dbReference type="SMR" id="Q5M2D4"/>
<dbReference type="STRING" id="264199.stu1913"/>
<dbReference type="KEGG" id="stl:stu1913"/>
<dbReference type="eggNOG" id="COG0563">
    <property type="taxonomic scope" value="Bacteria"/>
</dbReference>
<dbReference type="HOGENOM" id="CLU_032354_1_2_9"/>
<dbReference type="UniPathway" id="UPA00588">
    <property type="reaction ID" value="UER00649"/>
</dbReference>
<dbReference type="Proteomes" id="UP000001170">
    <property type="component" value="Chromosome"/>
</dbReference>
<dbReference type="GO" id="GO:0005737">
    <property type="term" value="C:cytoplasm"/>
    <property type="evidence" value="ECO:0007669"/>
    <property type="project" value="UniProtKB-SubCell"/>
</dbReference>
<dbReference type="GO" id="GO:0004017">
    <property type="term" value="F:adenylate kinase activity"/>
    <property type="evidence" value="ECO:0007669"/>
    <property type="project" value="UniProtKB-UniRule"/>
</dbReference>
<dbReference type="GO" id="GO:0005524">
    <property type="term" value="F:ATP binding"/>
    <property type="evidence" value="ECO:0007669"/>
    <property type="project" value="UniProtKB-UniRule"/>
</dbReference>
<dbReference type="GO" id="GO:0008270">
    <property type="term" value="F:zinc ion binding"/>
    <property type="evidence" value="ECO:0007669"/>
    <property type="project" value="UniProtKB-UniRule"/>
</dbReference>
<dbReference type="GO" id="GO:0044209">
    <property type="term" value="P:AMP salvage"/>
    <property type="evidence" value="ECO:0007669"/>
    <property type="project" value="UniProtKB-UniRule"/>
</dbReference>
<dbReference type="CDD" id="cd01428">
    <property type="entry name" value="ADK"/>
    <property type="match status" value="1"/>
</dbReference>
<dbReference type="FunFam" id="3.40.50.300:FF:000106">
    <property type="entry name" value="Adenylate kinase mitochondrial"/>
    <property type="match status" value="1"/>
</dbReference>
<dbReference type="Gene3D" id="3.40.50.300">
    <property type="entry name" value="P-loop containing nucleotide triphosphate hydrolases"/>
    <property type="match status" value="1"/>
</dbReference>
<dbReference type="HAMAP" id="MF_00235">
    <property type="entry name" value="Adenylate_kinase_Adk"/>
    <property type="match status" value="1"/>
</dbReference>
<dbReference type="InterPro" id="IPR006259">
    <property type="entry name" value="Adenyl_kin_sub"/>
</dbReference>
<dbReference type="InterPro" id="IPR000850">
    <property type="entry name" value="Adenylat/UMP-CMP_kin"/>
</dbReference>
<dbReference type="InterPro" id="IPR033690">
    <property type="entry name" value="Adenylat_kinase_CS"/>
</dbReference>
<dbReference type="InterPro" id="IPR007862">
    <property type="entry name" value="Adenylate_kinase_lid-dom"/>
</dbReference>
<dbReference type="InterPro" id="IPR027417">
    <property type="entry name" value="P-loop_NTPase"/>
</dbReference>
<dbReference type="NCBIfam" id="TIGR01351">
    <property type="entry name" value="adk"/>
    <property type="match status" value="1"/>
</dbReference>
<dbReference type="NCBIfam" id="NF001380">
    <property type="entry name" value="PRK00279.1-2"/>
    <property type="match status" value="1"/>
</dbReference>
<dbReference type="NCBIfam" id="NF001381">
    <property type="entry name" value="PRK00279.1-3"/>
    <property type="match status" value="1"/>
</dbReference>
<dbReference type="NCBIfam" id="NF001382">
    <property type="entry name" value="PRK00279.1-4"/>
    <property type="match status" value="1"/>
</dbReference>
<dbReference type="PANTHER" id="PTHR23359">
    <property type="entry name" value="NUCLEOTIDE KINASE"/>
    <property type="match status" value="1"/>
</dbReference>
<dbReference type="Pfam" id="PF00406">
    <property type="entry name" value="ADK"/>
    <property type="match status" value="1"/>
</dbReference>
<dbReference type="Pfam" id="PF05191">
    <property type="entry name" value="ADK_lid"/>
    <property type="match status" value="1"/>
</dbReference>
<dbReference type="PRINTS" id="PR00094">
    <property type="entry name" value="ADENYLTKNASE"/>
</dbReference>
<dbReference type="SUPFAM" id="SSF52540">
    <property type="entry name" value="P-loop containing nucleoside triphosphate hydrolases"/>
    <property type="match status" value="1"/>
</dbReference>
<dbReference type="PROSITE" id="PS00113">
    <property type="entry name" value="ADENYLATE_KINASE"/>
    <property type="match status" value="1"/>
</dbReference>
<accession>Q5M2D4</accession>